<sequence length="255" mass="27588">MRLTALPAFDDNYIWALVANDGRAVIVDPGQAAPVLEAAQREGFTPVAALLTHHHADHIGGVAELQQHFPALELYGPDDERMPSATRHVAHGDTVTALGIDFAVLEVPGHTRSHVAYVGDGHLFSGDTLFSLGCGRMFEGTPPQMFDALQRLASLPGETLVCCGHEYTLANAAFALHVDPTNAALQRRQQEAQAMRHAARPTLPISLKSELATNPFLRLHTPEIRAAAAAHASISITSDVDVFAELRRWKDAFRA</sequence>
<dbReference type="EC" id="3.1.2.6" evidence="1"/>
<dbReference type="EMBL" id="AE008922">
    <property type="protein sequence ID" value="AAM40287.1"/>
    <property type="molecule type" value="Genomic_DNA"/>
</dbReference>
<dbReference type="RefSeq" id="NP_636363.1">
    <property type="nucleotide sequence ID" value="NC_003902.1"/>
</dbReference>
<dbReference type="RefSeq" id="WP_011036190.1">
    <property type="nucleotide sequence ID" value="NC_003902.1"/>
</dbReference>
<dbReference type="SMR" id="Q8PBY0"/>
<dbReference type="STRING" id="190485.XCC0985"/>
<dbReference type="EnsemblBacteria" id="AAM40287">
    <property type="protein sequence ID" value="AAM40287"/>
    <property type="gene ID" value="XCC0985"/>
</dbReference>
<dbReference type="KEGG" id="xcc:XCC0985"/>
<dbReference type="PATRIC" id="fig|190485.4.peg.1051"/>
<dbReference type="eggNOG" id="COG0491">
    <property type="taxonomic scope" value="Bacteria"/>
</dbReference>
<dbReference type="HOGENOM" id="CLU_030571_4_1_6"/>
<dbReference type="OrthoDB" id="9802248at2"/>
<dbReference type="UniPathway" id="UPA00619">
    <property type="reaction ID" value="UER00676"/>
</dbReference>
<dbReference type="Proteomes" id="UP000001010">
    <property type="component" value="Chromosome"/>
</dbReference>
<dbReference type="GO" id="GO:0004416">
    <property type="term" value="F:hydroxyacylglutathione hydrolase activity"/>
    <property type="evidence" value="ECO:0007669"/>
    <property type="project" value="UniProtKB-UniRule"/>
</dbReference>
<dbReference type="GO" id="GO:0046872">
    <property type="term" value="F:metal ion binding"/>
    <property type="evidence" value="ECO:0007669"/>
    <property type="project" value="UniProtKB-KW"/>
</dbReference>
<dbReference type="GO" id="GO:0019243">
    <property type="term" value="P:methylglyoxal catabolic process to D-lactate via S-lactoyl-glutathione"/>
    <property type="evidence" value="ECO:0007669"/>
    <property type="project" value="InterPro"/>
</dbReference>
<dbReference type="CDD" id="cd07723">
    <property type="entry name" value="hydroxyacylglutathione_hydrolase_MBL-fold"/>
    <property type="match status" value="1"/>
</dbReference>
<dbReference type="Gene3D" id="3.60.15.10">
    <property type="entry name" value="Ribonuclease Z/Hydroxyacylglutathione hydrolase-like"/>
    <property type="match status" value="1"/>
</dbReference>
<dbReference type="HAMAP" id="MF_01374">
    <property type="entry name" value="Glyoxalase_2"/>
    <property type="match status" value="1"/>
</dbReference>
<dbReference type="InterPro" id="IPR035680">
    <property type="entry name" value="Clx_II_MBL"/>
</dbReference>
<dbReference type="InterPro" id="IPR050110">
    <property type="entry name" value="Glyoxalase_II_hydrolase"/>
</dbReference>
<dbReference type="InterPro" id="IPR032282">
    <property type="entry name" value="HAGH_C"/>
</dbReference>
<dbReference type="InterPro" id="IPR017782">
    <property type="entry name" value="Hydroxyacylglutathione_Hdrlase"/>
</dbReference>
<dbReference type="InterPro" id="IPR001279">
    <property type="entry name" value="Metallo-B-lactamas"/>
</dbReference>
<dbReference type="InterPro" id="IPR036866">
    <property type="entry name" value="RibonucZ/Hydroxyglut_hydro"/>
</dbReference>
<dbReference type="NCBIfam" id="TIGR03413">
    <property type="entry name" value="GSH_gloB"/>
    <property type="match status" value="1"/>
</dbReference>
<dbReference type="PANTHER" id="PTHR43705">
    <property type="entry name" value="HYDROXYACYLGLUTATHIONE HYDROLASE"/>
    <property type="match status" value="1"/>
</dbReference>
<dbReference type="PANTHER" id="PTHR43705:SF1">
    <property type="entry name" value="HYDROXYACYLGLUTATHIONE HYDROLASE GLOB"/>
    <property type="match status" value="1"/>
</dbReference>
<dbReference type="Pfam" id="PF16123">
    <property type="entry name" value="HAGH_C"/>
    <property type="match status" value="1"/>
</dbReference>
<dbReference type="Pfam" id="PF00753">
    <property type="entry name" value="Lactamase_B"/>
    <property type="match status" value="1"/>
</dbReference>
<dbReference type="PIRSF" id="PIRSF005457">
    <property type="entry name" value="Glx"/>
    <property type="match status" value="1"/>
</dbReference>
<dbReference type="SMART" id="SM00849">
    <property type="entry name" value="Lactamase_B"/>
    <property type="match status" value="1"/>
</dbReference>
<dbReference type="SUPFAM" id="SSF56281">
    <property type="entry name" value="Metallo-hydrolase/oxidoreductase"/>
    <property type="match status" value="1"/>
</dbReference>
<keyword id="KW-0378">Hydrolase</keyword>
<keyword id="KW-0479">Metal-binding</keyword>
<keyword id="KW-1185">Reference proteome</keyword>
<keyword id="KW-0862">Zinc</keyword>
<gene>
    <name evidence="1" type="primary">gloB</name>
    <name type="ordered locus">XCC0985</name>
</gene>
<feature type="chain" id="PRO_1000068232" description="Hydroxyacylglutathione hydrolase">
    <location>
        <begin position="1"/>
        <end position="255"/>
    </location>
</feature>
<feature type="binding site" evidence="1">
    <location>
        <position position="53"/>
    </location>
    <ligand>
        <name>Zn(2+)</name>
        <dbReference type="ChEBI" id="CHEBI:29105"/>
        <label>1</label>
    </ligand>
</feature>
<feature type="binding site" evidence="1">
    <location>
        <position position="55"/>
    </location>
    <ligand>
        <name>Zn(2+)</name>
        <dbReference type="ChEBI" id="CHEBI:29105"/>
        <label>1</label>
    </ligand>
</feature>
<feature type="binding site" evidence="1">
    <location>
        <position position="57"/>
    </location>
    <ligand>
        <name>Zn(2+)</name>
        <dbReference type="ChEBI" id="CHEBI:29105"/>
        <label>2</label>
    </ligand>
</feature>
<feature type="binding site" evidence="1">
    <location>
        <position position="58"/>
    </location>
    <ligand>
        <name>Zn(2+)</name>
        <dbReference type="ChEBI" id="CHEBI:29105"/>
        <label>2</label>
    </ligand>
</feature>
<feature type="binding site" evidence="1">
    <location>
        <position position="110"/>
    </location>
    <ligand>
        <name>Zn(2+)</name>
        <dbReference type="ChEBI" id="CHEBI:29105"/>
        <label>1</label>
    </ligand>
</feature>
<feature type="binding site" evidence="1">
    <location>
        <position position="127"/>
    </location>
    <ligand>
        <name>Zn(2+)</name>
        <dbReference type="ChEBI" id="CHEBI:29105"/>
        <label>1</label>
    </ligand>
</feature>
<feature type="binding site" evidence="1">
    <location>
        <position position="127"/>
    </location>
    <ligand>
        <name>Zn(2+)</name>
        <dbReference type="ChEBI" id="CHEBI:29105"/>
        <label>2</label>
    </ligand>
</feature>
<feature type="binding site" evidence="1">
    <location>
        <position position="165"/>
    </location>
    <ligand>
        <name>Zn(2+)</name>
        <dbReference type="ChEBI" id="CHEBI:29105"/>
        <label>2</label>
    </ligand>
</feature>
<evidence type="ECO:0000255" key="1">
    <source>
        <dbReference type="HAMAP-Rule" id="MF_01374"/>
    </source>
</evidence>
<reference key="1">
    <citation type="journal article" date="2002" name="Nature">
        <title>Comparison of the genomes of two Xanthomonas pathogens with differing host specificities.</title>
        <authorList>
            <person name="da Silva A.C.R."/>
            <person name="Ferro J.A."/>
            <person name="Reinach F.C."/>
            <person name="Farah C.S."/>
            <person name="Furlan L.R."/>
            <person name="Quaggio R.B."/>
            <person name="Monteiro-Vitorello C.B."/>
            <person name="Van Sluys M.A."/>
            <person name="Almeida N.F. Jr."/>
            <person name="Alves L.M.C."/>
            <person name="do Amaral A.M."/>
            <person name="Bertolini M.C."/>
            <person name="Camargo L.E.A."/>
            <person name="Camarotte G."/>
            <person name="Cannavan F."/>
            <person name="Cardozo J."/>
            <person name="Chambergo F."/>
            <person name="Ciapina L.P."/>
            <person name="Cicarelli R.M.B."/>
            <person name="Coutinho L.L."/>
            <person name="Cursino-Santos J.R."/>
            <person name="El-Dorry H."/>
            <person name="Faria J.B."/>
            <person name="Ferreira A.J.S."/>
            <person name="Ferreira R.C.C."/>
            <person name="Ferro M.I.T."/>
            <person name="Formighieri E.F."/>
            <person name="Franco M.C."/>
            <person name="Greggio C.C."/>
            <person name="Gruber A."/>
            <person name="Katsuyama A.M."/>
            <person name="Kishi L.T."/>
            <person name="Leite R.P."/>
            <person name="Lemos E.G.M."/>
            <person name="Lemos M.V.F."/>
            <person name="Locali E.C."/>
            <person name="Machado M.A."/>
            <person name="Madeira A.M.B.N."/>
            <person name="Martinez-Rossi N.M."/>
            <person name="Martins E.C."/>
            <person name="Meidanis J."/>
            <person name="Menck C.F.M."/>
            <person name="Miyaki C.Y."/>
            <person name="Moon D.H."/>
            <person name="Moreira L.M."/>
            <person name="Novo M.T.M."/>
            <person name="Okura V.K."/>
            <person name="Oliveira M.C."/>
            <person name="Oliveira V.R."/>
            <person name="Pereira H.A."/>
            <person name="Rossi A."/>
            <person name="Sena J.A.D."/>
            <person name="Silva C."/>
            <person name="de Souza R.F."/>
            <person name="Spinola L.A.F."/>
            <person name="Takita M.A."/>
            <person name="Tamura R.E."/>
            <person name="Teixeira E.C."/>
            <person name="Tezza R.I.D."/>
            <person name="Trindade dos Santos M."/>
            <person name="Truffi D."/>
            <person name="Tsai S.M."/>
            <person name="White F.F."/>
            <person name="Setubal J.C."/>
            <person name="Kitajima J.P."/>
        </authorList>
    </citation>
    <scope>NUCLEOTIDE SEQUENCE [LARGE SCALE GENOMIC DNA]</scope>
    <source>
        <strain>ATCC 33913 / DSM 3586 / NCPPB 528 / LMG 568 / P 25</strain>
    </source>
</reference>
<name>GLO2_XANCP</name>
<accession>Q8PBY0</accession>
<protein>
    <recommendedName>
        <fullName evidence="1">Hydroxyacylglutathione hydrolase</fullName>
        <ecNumber evidence="1">3.1.2.6</ecNumber>
    </recommendedName>
    <alternativeName>
        <fullName evidence="1">Glyoxalase II</fullName>
        <shortName evidence="1">Glx II</shortName>
    </alternativeName>
</protein>
<proteinExistence type="inferred from homology"/>
<organism>
    <name type="scientific">Xanthomonas campestris pv. campestris (strain ATCC 33913 / DSM 3586 / NCPPB 528 / LMG 568 / P 25)</name>
    <dbReference type="NCBI Taxonomy" id="190485"/>
    <lineage>
        <taxon>Bacteria</taxon>
        <taxon>Pseudomonadati</taxon>
        <taxon>Pseudomonadota</taxon>
        <taxon>Gammaproteobacteria</taxon>
        <taxon>Lysobacterales</taxon>
        <taxon>Lysobacteraceae</taxon>
        <taxon>Xanthomonas</taxon>
    </lineage>
</organism>
<comment type="function">
    <text evidence="1">Thiolesterase that catalyzes the hydrolysis of S-D-lactoyl-glutathione to form glutathione and D-lactic acid.</text>
</comment>
<comment type="catalytic activity">
    <reaction evidence="1">
        <text>an S-(2-hydroxyacyl)glutathione + H2O = a 2-hydroxy carboxylate + glutathione + H(+)</text>
        <dbReference type="Rhea" id="RHEA:21864"/>
        <dbReference type="ChEBI" id="CHEBI:15377"/>
        <dbReference type="ChEBI" id="CHEBI:15378"/>
        <dbReference type="ChEBI" id="CHEBI:57925"/>
        <dbReference type="ChEBI" id="CHEBI:58896"/>
        <dbReference type="ChEBI" id="CHEBI:71261"/>
        <dbReference type="EC" id="3.1.2.6"/>
    </reaction>
</comment>
<comment type="cofactor">
    <cofactor evidence="1">
        <name>Zn(2+)</name>
        <dbReference type="ChEBI" id="CHEBI:29105"/>
    </cofactor>
    <text evidence="1">Binds 2 Zn(2+) ions per subunit.</text>
</comment>
<comment type="pathway">
    <text evidence="1">Secondary metabolite metabolism; methylglyoxal degradation; (R)-lactate from methylglyoxal: step 2/2.</text>
</comment>
<comment type="subunit">
    <text evidence="1">Monomer.</text>
</comment>
<comment type="similarity">
    <text evidence="1">Belongs to the metallo-beta-lactamase superfamily. Glyoxalase II family.</text>
</comment>